<organismHost>
    <name type="scientific">Pseudomonas aeruginosa</name>
    <dbReference type="NCBI Taxonomy" id="287"/>
</organismHost>
<keyword id="KW-0929">Antimicrobial</keyword>
<keyword id="KW-0081">Bacteriolytic enzyme</keyword>
<keyword id="KW-1235">Degradation of host cell envelope components during virus entry</keyword>
<keyword id="KW-1236">Degradation of host peptidoglycans during virus entry</keyword>
<keyword id="KW-0326">Glycosidase</keyword>
<keyword id="KW-0378">Hydrolase</keyword>
<keyword id="KW-1185">Reference proteome</keyword>
<keyword id="KW-1171">Viral genome ejection through host cell envelope</keyword>
<keyword id="KW-1162">Viral penetration into host cytoplasm</keyword>
<keyword id="KW-1244">Viral short tail ejection system</keyword>
<keyword id="KW-0946">Virion</keyword>
<keyword id="KW-1160">Virus entry into host cell</keyword>
<reference key="1">
    <citation type="journal article" date="2003" name="Virology">
        <title>The genome of bacteriophage phiKMV, a T7-like virus infecting Pseudomonas aeruginosa.</title>
        <authorList>
            <person name="Lavigne R."/>
            <person name="Burkal'tseva M.V."/>
            <person name="Robben J."/>
            <person name="Sykilinda N.N."/>
            <person name="Kurochkina L.P."/>
            <person name="Grymonprez B."/>
            <person name="Jonckx B."/>
            <person name="Krylov V.N."/>
            <person name="Mesyanzhinov V.V."/>
            <person name="Volckaert G."/>
        </authorList>
    </citation>
    <scope>NUCLEOTIDE SEQUENCE [LARGE SCALE GENOMIC DNA]</scope>
</reference>
<reference key="2">
    <citation type="journal article" date="2004" name="Cell. Mol. Life Sci.">
        <title>Identification and characterization of a highly thermostable bacteriophage lysozyme.</title>
        <authorList>
            <person name="Lavigne R."/>
            <person name="Briers Y."/>
            <person name="Hertveldt K."/>
            <person name="Robben J."/>
            <person name="Volckaert G."/>
        </authorList>
    </citation>
    <scope>NUCLEOTIDE SEQUENCE [GENOMIC DNA]</scope>
    <scope>FUNCTION</scope>
    <scope>IDENTIFICATION</scope>
    <scope>SUBCELLULAR LOCATION</scope>
</reference>
<reference key="3">
    <citation type="journal article" date="2006" name="Cell. Mol. Life Sci.">
        <title>Stability analysis of the bacteriophage phiKMV lysin gp36C and its putative role during infection.</title>
        <authorList>
            <person name="Briers Y."/>
            <person name="Lavigne R."/>
            <person name="Plessers P."/>
            <person name="Hertveldt K."/>
            <person name="Hanssens I."/>
            <person name="Engelborghs Y."/>
            <person name="Volckaert G."/>
        </authorList>
    </citation>
    <scope>BIOPHYSICOCHEMICAL PROPERTIES</scope>
    <scope>FUNCTION</scope>
</reference>
<reference key="4">
    <citation type="journal article" date="2013" name="Crit. Rev. Microbiol.">
        <title>Bacteriophage virion-associated peptidoglycan hydrolases: potential new enzybiotics.</title>
        <authorList>
            <person name="Rodriguez-Rubio L."/>
            <person name="Martinez B."/>
            <person name="Donovan D.M."/>
            <person name="Rodriguez A."/>
            <person name="Garcia P."/>
        </authorList>
    </citation>
    <scope>REVIEW</scope>
</reference>
<gene>
    <name evidence="7" type="primary">gp36</name>
</gene>
<evidence type="ECO:0000256" key="1">
    <source>
        <dbReference type="SAM" id="MobiDB-lite"/>
    </source>
</evidence>
<evidence type="ECO:0000269" key="2">
    <source>
    </source>
</evidence>
<evidence type="ECO:0000269" key="3">
    <source>
    </source>
</evidence>
<evidence type="ECO:0000305" key="4"/>
<evidence type="ECO:0000305" key="5">
    <source>
    </source>
</evidence>
<evidence type="ECO:0000305" key="6">
    <source>
    </source>
</evidence>
<evidence type="ECO:0000312" key="7">
    <source>
        <dbReference type="EMBL" id="CAD44227.1"/>
    </source>
</evidence>
<evidence type="ECO:0000312" key="8">
    <source>
        <dbReference type="Proteomes" id="UP000000842"/>
    </source>
</evidence>
<feature type="chain" id="PRO_0000432973" description="Peptidoglycan hydrolase gp36">
    <location>
        <begin position="1"/>
        <end position="898"/>
    </location>
</feature>
<feature type="region of interest" description="Disordered" evidence="1">
    <location>
        <begin position="1"/>
        <end position="35"/>
    </location>
</feature>
<feature type="compositionally biased region" description="Polar residues" evidence="1">
    <location>
        <begin position="15"/>
        <end position="24"/>
    </location>
</feature>
<dbReference type="EC" id="3.2.1.17" evidence="7"/>
<dbReference type="EMBL" id="AJ505558">
    <property type="protein sequence ID" value="CAD44227.1"/>
    <property type="molecule type" value="Genomic_DNA"/>
</dbReference>
<dbReference type="RefSeq" id="NP_877475.1">
    <property type="nucleotide sequence ID" value="NC_005045.1"/>
</dbReference>
<dbReference type="CAZy" id="GH24">
    <property type="family name" value="Glycoside Hydrolase Family 24"/>
</dbReference>
<dbReference type="GeneID" id="1482616"/>
<dbReference type="KEGG" id="vg:1482616"/>
<dbReference type="OrthoDB" id="172at10239"/>
<dbReference type="Proteomes" id="UP000000842">
    <property type="component" value="Genome"/>
</dbReference>
<dbReference type="GO" id="GO:0044423">
    <property type="term" value="C:virion component"/>
    <property type="evidence" value="ECO:0007669"/>
    <property type="project" value="UniProtKB-KW"/>
</dbReference>
<dbReference type="GO" id="GO:0003796">
    <property type="term" value="F:lysozyme activity"/>
    <property type="evidence" value="ECO:0007669"/>
    <property type="project" value="UniProtKB-EC"/>
</dbReference>
<dbReference type="GO" id="GO:0042742">
    <property type="term" value="P:defense response to bacterium"/>
    <property type="evidence" value="ECO:0007669"/>
    <property type="project" value="UniProtKB-KW"/>
</dbReference>
<dbReference type="GO" id="GO:0031640">
    <property type="term" value="P:killing of cells of another organism"/>
    <property type="evidence" value="ECO:0007669"/>
    <property type="project" value="UniProtKB-KW"/>
</dbReference>
<dbReference type="GO" id="GO:0044409">
    <property type="term" value="P:symbiont entry into host"/>
    <property type="evidence" value="ECO:0000314"/>
    <property type="project" value="UniProtKB"/>
</dbReference>
<dbReference type="GO" id="GO:0098994">
    <property type="term" value="P:symbiont entry into host cell via disruption of host cell envelope"/>
    <property type="evidence" value="ECO:0007669"/>
    <property type="project" value="UniProtKB-KW"/>
</dbReference>
<dbReference type="GO" id="GO:0098932">
    <property type="term" value="P:symbiont entry into host cell via disruption of host cell wall peptidoglycan"/>
    <property type="evidence" value="ECO:0007669"/>
    <property type="project" value="UniProtKB-KW"/>
</dbReference>
<dbReference type="GO" id="GO:0099002">
    <property type="term" value="P:symbiont genome ejection through host cell envelope, short tail mechanism"/>
    <property type="evidence" value="ECO:0007669"/>
    <property type="project" value="UniProtKB-KW"/>
</dbReference>
<dbReference type="CDD" id="cd00735">
    <property type="entry name" value="T4-like_lys"/>
    <property type="match status" value="1"/>
</dbReference>
<dbReference type="Gene3D" id="1.10.530.40">
    <property type="match status" value="1"/>
</dbReference>
<dbReference type="InterPro" id="IPR023346">
    <property type="entry name" value="Lysozyme-like_dom_sf"/>
</dbReference>
<dbReference type="InterPro" id="IPR023347">
    <property type="entry name" value="Lysozyme_dom_sf"/>
</dbReference>
<dbReference type="SUPFAM" id="SSF53955">
    <property type="entry name" value="Lysozyme-like"/>
    <property type="match status" value="1"/>
</dbReference>
<proteinExistence type="evidence at protein level"/>
<organism evidence="8">
    <name type="scientific">Pseudomonas phage phiKMV</name>
    <dbReference type="NCBI Taxonomy" id="204270"/>
    <lineage>
        <taxon>Viruses</taxon>
        <taxon>Duplodnaviria</taxon>
        <taxon>Heunggongvirae</taxon>
        <taxon>Uroviricota</taxon>
        <taxon>Caudoviricetes</taxon>
        <taxon>Autographiviridae</taxon>
        <taxon>Krylovirinae</taxon>
        <taxon>Phikmvvirus</taxon>
        <taxon>Phikmvvirus phiKMV</taxon>
    </lineage>
</organism>
<name>EXLYS_BPKMV</name>
<sequence length="898" mass="98250">MAESQRASQELGINVGQTQLQPGQSARRGVRDSEVNYSGPSVGSQILDGILGAGQQIAGKWFEHNVQQEVLRGERARMAGEAEEAVDSNVLAKPFVKGGWRKQDYRIAQADFSLKMQRFIANKGREMTPEEFRKYLSQEATHVLDSTEGMNPNDALQALAQQQKAEEQLFGMQAKAYMDWSIDQAARGFRTQGNSILAKAVQAQATGDELSRQLSLEEAGLFYTNIMTSEDIPLEVRDKVGMQFLAASLDMNQRGIYEGLRDAGFLDSMSFDDRRALNGLYEKSKAQTRAKESMATLRADADFQQRVANGAITDLAEVEAYSRGMVEEGRWSDAQAISFMTKAMTGLGNAQRMQGIMAALEAGDINALHTLGTNVTEALEQWDKMQAANGSSLTDRLVQGTQLGLRLGTFPKTYGESVGSAVRMIQAAKEGEANPELVNTLNSIFEQVASAQEINPSAGNVMLSGIPEAEQGAVAWALKQMKMGIAPAQALREFSANAEVVKQMDEFEKGQNTKAFKDNLGKQVNDKFVNNIFGRAWNMLTGESDLSNNEAVLSMYRRATIDEANWLASDRKHAGLLTSDTGREALLEIAAANVRNRTIQVGEGRNLKEGDLFSRRDSAPLILPRGTTAEQLFGTNDTETIGTVLAEQHKPHVEGLLGYKSVVAFEYDRTSGSLLAVEYDENGVALDRTRVDPQAVGKEVLKRNADKLNAMRGAEYGANVKVSGTDIRMNGGNSAGMLKQDVFNWRKELAQFEAYRGEAYKDADGYSVGLGHYLGSGNAGAGTTVTPEQAAQWFAEDTDRALDQGVRLADELGVTNNASILGLAGMAFQMGEGRARQFRNTFQAIKDRNKEAFEAGVRNSKWYTQTPDRAEAFIKRMAPHFDTPSQIGVDWYSAATAE</sequence>
<protein>
    <recommendedName>
        <fullName evidence="4">Peptidoglycan hydrolase gp36</fullName>
        <ecNumber evidence="7">3.2.1.17</ecNumber>
    </recommendedName>
    <alternativeName>
        <fullName evidence="4">Gene product 36</fullName>
        <shortName>Gp36</shortName>
    </alternativeName>
</protein>
<accession>Q7Y2C9</accession>
<comment type="function">
    <text evidence="5 6">Component of the cylindrical core that assembles on the inner surface of the capsid during procapsid formation. Plays a role in ejection of the bacteriophage DNA into the host cell at the initiation of infection. Functions as an exolysin that catalyzes the cleavage of the host peptidoglycans.</text>
</comment>
<comment type="catalytic activity">
    <reaction evidence="7">
        <text>Hydrolysis of (1-&gt;4)-beta-linkages between N-acetylmuramic acid and N-acetyl-D-glucosamine residues in a peptidoglycan and between N-acetyl-D-glucosamine residues in chitodextrins.</text>
        <dbReference type="EC" id="3.2.1.17"/>
    </reaction>
</comment>
<comment type="biophysicochemical properties">
    <phDependence>
        <text evidence="3">Optimum pH is 6.</text>
    </phDependence>
    <temperatureDependence>
        <text evidence="3">The enzyme is highly thermoresistant, but not thermostable.</text>
    </temperatureDependence>
</comment>
<comment type="subcellular location">
    <subcellularLocation>
        <location evidence="2">Virion</location>
    </subcellularLocation>
</comment>